<organism>
    <name type="scientific">Stenotrophomonas maltophilia (strain R551-3)</name>
    <dbReference type="NCBI Taxonomy" id="391008"/>
    <lineage>
        <taxon>Bacteria</taxon>
        <taxon>Pseudomonadati</taxon>
        <taxon>Pseudomonadota</taxon>
        <taxon>Gammaproteobacteria</taxon>
        <taxon>Lysobacterales</taxon>
        <taxon>Lysobacteraceae</taxon>
        <taxon>Stenotrophomonas</taxon>
        <taxon>Stenotrophomonas maltophilia group</taxon>
    </lineage>
</organism>
<comment type="function">
    <text evidence="1">An essential GTPase that binds both GDP and GTP, with rapid nucleotide exchange. Plays a role in 16S rRNA processing and 30S ribosomal subunit biogenesis and possibly also in cell cycle regulation and energy metabolism.</text>
</comment>
<comment type="subunit">
    <text evidence="1">Monomer.</text>
</comment>
<comment type="subcellular location">
    <subcellularLocation>
        <location>Cytoplasm</location>
    </subcellularLocation>
    <subcellularLocation>
        <location evidence="1">Cell inner membrane</location>
        <topology evidence="1">Peripheral membrane protein</topology>
    </subcellularLocation>
</comment>
<comment type="similarity">
    <text evidence="1 2">Belongs to the TRAFAC class TrmE-Era-EngA-EngB-Septin-like GTPase superfamily. Era GTPase family.</text>
</comment>
<evidence type="ECO:0000255" key="1">
    <source>
        <dbReference type="HAMAP-Rule" id="MF_00367"/>
    </source>
</evidence>
<evidence type="ECO:0000255" key="2">
    <source>
        <dbReference type="PROSITE-ProRule" id="PRU01050"/>
    </source>
</evidence>
<proteinExistence type="inferred from homology"/>
<reference key="1">
    <citation type="submission" date="2008-06" db="EMBL/GenBank/DDBJ databases">
        <title>Complete sequence of Stenotrophomonas maltophilia R551-3.</title>
        <authorList>
            <consortium name="US DOE Joint Genome Institute"/>
            <person name="Lucas S."/>
            <person name="Copeland A."/>
            <person name="Lapidus A."/>
            <person name="Glavina del Rio T."/>
            <person name="Dalin E."/>
            <person name="Tice H."/>
            <person name="Pitluck S."/>
            <person name="Chain P."/>
            <person name="Malfatti S."/>
            <person name="Shin M."/>
            <person name="Vergez L."/>
            <person name="Lang D."/>
            <person name="Schmutz J."/>
            <person name="Larimer F."/>
            <person name="Land M."/>
            <person name="Hauser L."/>
            <person name="Kyrpides N."/>
            <person name="Mikhailova N."/>
            <person name="Taghavi S."/>
            <person name="Monchy S."/>
            <person name="Newman L."/>
            <person name="Vangronsveld J."/>
            <person name="van der Lelie D."/>
            <person name="Richardson P."/>
        </authorList>
    </citation>
    <scope>NUCLEOTIDE SEQUENCE [LARGE SCALE GENOMIC DNA]</scope>
    <source>
        <strain>R551-3</strain>
    </source>
</reference>
<gene>
    <name evidence="1" type="primary">era</name>
    <name type="ordered locus">Smal_2974</name>
</gene>
<dbReference type="EMBL" id="CP001111">
    <property type="protein sequence ID" value="ACF52673.1"/>
    <property type="molecule type" value="Genomic_DNA"/>
</dbReference>
<dbReference type="RefSeq" id="WP_006382863.1">
    <property type="nucleotide sequence ID" value="NC_011071.1"/>
</dbReference>
<dbReference type="SMR" id="B4SRK9"/>
<dbReference type="STRING" id="391008.Smal_2974"/>
<dbReference type="KEGG" id="smt:Smal_2974"/>
<dbReference type="eggNOG" id="COG1159">
    <property type="taxonomic scope" value="Bacteria"/>
</dbReference>
<dbReference type="HOGENOM" id="CLU_038009_1_2_6"/>
<dbReference type="OrthoDB" id="9805918at2"/>
<dbReference type="Proteomes" id="UP000001867">
    <property type="component" value="Chromosome"/>
</dbReference>
<dbReference type="GO" id="GO:0005829">
    <property type="term" value="C:cytosol"/>
    <property type="evidence" value="ECO:0007669"/>
    <property type="project" value="TreeGrafter"/>
</dbReference>
<dbReference type="GO" id="GO:0005886">
    <property type="term" value="C:plasma membrane"/>
    <property type="evidence" value="ECO:0007669"/>
    <property type="project" value="UniProtKB-SubCell"/>
</dbReference>
<dbReference type="GO" id="GO:0005525">
    <property type="term" value="F:GTP binding"/>
    <property type="evidence" value="ECO:0007669"/>
    <property type="project" value="UniProtKB-UniRule"/>
</dbReference>
<dbReference type="GO" id="GO:0003924">
    <property type="term" value="F:GTPase activity"/>
    <property type="evidence" value="ECO:0007669"/>
    <property type="project" value="UniProtKB-UniRule"/>
</dbReference>
<dbReference type="GO" id="GO:0043024">
    <property type="term" value="F:ribosomal small subunit binding"/>
    <property type="evidence" value="ECO:0007669"/>
    <property type="project" value="TreeGrafter"/>
</dbReference>
<dbReference type="GO" id="GO:0070181">
    <property type="term" value="F:small ribosomal subunit rRNA binding"/>
    <property type="evidence" value="ECO:0007669"/>
    <property type="project" value="UniProtKB-UniRule"/>
</dbReference>
<dbReference type="GO" id="GO:0000028">
    <property type="term" value="P:ribosomal small subunit assembly"/>
    <property type="evidence" value="ECO:0007669"/>
    <property type="project" value="TreeGrafter"/>
</dbReference>
<dbReference type="CDD" id="cd04163">
    <property type="entry name" value="Era"/>
    <property type="match status" value="1"/>
</dbReference>
<dbReference type="CDD" id="cd22534">
    <property type="entry name" value="KH-II_Era"/>
    <property type="match status" value="1"/>
</dbReference>
<dbReference type="FunFam" id="3.30.300.20:FF:000003">
    <property type="entry name" value="GTPase Era"/>
    <property type="match status" value="1"/>
</dbReference>
<dbReference type="Gene3D" id="3.30.300.20">
    <property type="match status" value="1"/>
</dbReference>
<dbReference type="Gene3D" id="3.40.50.300">
    <property type="entry name" value="P-loop containing nucleotide triphosphate hydrolases"/>
    <property type="match status" value="1"/>
</dbReference>
<dbReference type="HAMAP" id="MF_00367">
    <property type="entry name" value="GTPase_Era"/>
    <property type="match status" value="1"/>
</dbReference>
<dbReference type="InterPro" id="IPR030388">
    <property type="entry name" value="G_ERA_dom"/>
</dbReference>
<dbReference type="InterPro" id="IPR006073">
    <property type="entry name" value="GTP-bd"/>
</dbReference>
<dbReference type="InterPro" id="IPR005662">
    <property type="entry name" value="GTPase_Era-like"/>
</dbReference>
<dbReference type="InterPro" id="IPR015946">
    <property type="entry name" value="KH_dom-like_a/b"/>
</dbReference>
<dbReference type="InterPro" id="IPR004044">
    <property type="entry name" value="KH_dom_type_2"/>
</dbReference>
<dbReference type="InterPro" id="IPR009019">
    <property type="entry name" value="KH_sf_prok-type"/>
</dbReference>
<dbReference type="InterPro" id="IPR027417">
    <property type="entry name" value="P-loop_NTPase"/>
</dbReference>
<dbReference type="InterPro" id="IPR005225">
    <property type="entry name" value="Small_GTP-bd"/>
</dbReference>
<dbReference type="NCBIfam" id="TIGR00436">
    <property type="entry name" value="era"/>
    <property type="match status" value="1"/>
</dbReference>
<dbReference type="NCBIfam" id="NF000908">
    <property type="entry name" value="PRK00089.1"/>
    <property type="match status" value="1"/>
</dbReference>
<dbReference type="NCBIfam" id="TIGR00231">
    <property type="entry name" value="small_GTP"/>
    <property type="match status" value="1"/>
</dbReference>
<dbReference type="PANTHER" id="PTHR42698">
    <property type="entry name" value="GTPASE ERA"/>
    <property type="match status" value="1"/>
</dbReference>
<dbReference type="PANTHER" id="PTHR42698:SF1">
    <property type="entry name" value="GTPASE ERA, MITOCHONDRIAL"/>
    <property type="match status" value="1"/>
</dbReference>
<dbReference type="Pfam" id="PF07650">
    <property type="entry name" value="KH_2"/>
    <property type="match status" value="1"/>
</dbReference>
<dbReference type="Pfam" id="PF01926">
    <property type="entry name" value="MMR_HSR1"/>
    <property type="match status" value="1"/>
</dbReference>
<dbReference type="PRINTS" id="PR00326">
    <property type="entry name" value="GTP1OBG"/>
</dbReference>
<dbReference type="SUPFAM" id="SSF52540">
    <property type="entry name" value="P-loop containing nucleoside triphosphate hydrolases"/>
    <property type="match status" value="1"/>
</dbReference>
<dbReference type="SUPFAM" id="SSF54814">
    <property type="entry name" value="Prokaryotic type KH domain (KH-domain type II)"/>
    <property type="match status" value="1"/>
</dbReference>
<dbReference type="PROSITE" id="PS51713">
    <property type="entry name" value="G_ERA"/>
    <property type="match status" value="1"/>
</dbReference>
<dbReference type="PROSITE" id="PS50823">
    <property type="entry name" value="KH_TYPE_2"/>
    <property type="match status" value="1"/>
</dbReference>
<protein>
    <recommendedName>
        <fullName evidence="1">GTPase Era</fullName>
    </recommendedName>
</protein>
<name>ERA_STRM5</name>
<keyword id="KW-0997">Cell inner membrane</keyword>
<keyword id="KW-1003">Cell membrane</keyword>
<keyword id="KW-0963">Cytoplasm</keyword>
<keyword id="KW-0342">GTP-binding</keyword>
<keyword id="KW-0472">Membrane</keyword>
<keyword id="KW-0547">Nucleotide-binding</keyword>
<keyword id="KW-0690">Ribosome biogenesis</keyword>
<keyword id="KW-0694">RNA-binding</keyword>
<keyword id="KW-0699">rRNA-binding</keyword>
<sequence>MSEQTPHHCGSVAVIGRPNVGKSTLTNALVGAKVSIVSNRPQTTRHRLLGIATYPEGQLVLVDTPGLHKVQKRAMNRVMNRAARGSLEGVDAGLLVIEAGRWDEEDSLAFNVLRDAGIPVVLVVNKIDRLKDKGALLPFLQEVTAGRDFSSVHPISAQKRNGLEALVRDVLALLPEAPPMFGEDEITDRSQRFLAGELVREQLMRQLGEELPYATTVEIERFTEDGNLLRIGAVIWVEREGQKAIVIGKGGTRLKEIGAKSRLQMERLFGAKVFLETWVRVREGWSDDEAALKAFGYE</sequence>
<feature type="chain" id="PRO_1000121357" description="GTPase Era">
    <location>
        <begin position="1"/>
        <end position="298"/>
    </location>
</feature>
<feature type="domain" description="Era-type G" evidence="2">
    <location>
        <begin position="8"/>
        <end position="176"/>
    </location>
</feature>
<feature type="domain" description="KH type-2" evidence="1">
    <location>
        <begin position="199"/>
        <end position="283"/>
    </location>
</feature>
<feature type="region of interest" description="G1" evidence="2">
    <location>
        <begin position="16"/>
        <end position="23"/>
    </location>
</feature>
<feature type="region of interest" description="G2" evidence="2">
    <location>
        <begin position="42"/>
        <end position="46"/>
    </location>
</feature>
<feature type="region of interest" description="G3" evidence="2">
    <location>
        <begin position="63"/>
        <end position="66"/>
    </location>
</feature>
<feature type="region of interest" description="G4" evidence="2">
    <location>
        <begin position="125"/>
        <end position="128"/>
    </location>
</feature>
<feature type="region of interest" description="G5" evidence="2">
    <location>
        <begin position="155"/>
        <end position="157"/>
    </location>
</feature>
<feature type="binding site" evidence="1">
    <location>
        <begin position="16"/>
        <end position="23"/>
    </location>
    <ligand>
        <name>GTP</name>
        <dbReference type="ChEBI" id="CHEBI:37565"/>
    </ligand>
</feature>
<feature type="binding site" evidence="1">
    <location>
        <begin position="63"/>
        <end position="67"/>
    </location>
    <ligand>
        <name>GTP</name>
        <dbReference type="ChEBI" id="CHEBI:37565"/>
    </ligand>
</feature>
<feature type="binding site" evidence="1">
    <location>
        <begin position="125"/>
        <end position="128"/>
    </location>
    <ligand>
        <name>GTP</name>
        <dbReference type="ChEBI" id="CHEBI:37565"/>
    </ligand>
</feature>
<accession>B4SRK9</accession>